<gene>
    <name evidence="1" type="primary">trmD</name>
    <name type="ordered locus">BT_0893</name>
</gene>
<name>TRMD_BACTN</name>
<proteinExistence type="inferred from homology"/>
<sequence length="225" mass="25558">MRIDIITVLPEMIEGFFNCSIMKRAQNKGLAEIHIHNLRDYTEDKYRRVDDYPFGGFAGMVMKIEPIERCINALKAERDYDEVIFTTPDGEQFNQPMANSLSLAQNLIILCGHFKGIDYRIREHLITKEISIGDYVLTGGELAAAVMADAIVRIIPGVISDEQSALSDSFQDNLLAAPVYTRPADYKGWKVPDILLSGHEAKIKEWELQQSLERTKKLRPDLLED</sequence>
<keyword id="KW-0963">Cytoplasm</keyword>
<keyword id="KW-0489">Methyltransferase</keyword>
<keyword id="KW-1185">Reference proteome</keyword>
<keyword id="KW-0949">S-adenosyl-L-methionine</keyword>
<keyword id="KW-0808">Transferase</keyword>
<keyword id="KW-0819">tRNA processing</keyword>
<feature type="chain" id="PRO_0000060330" description="tRNA (guanine-N(1)-)-methyltransferase">
    <location>
        <begin position="1"/>
        <end position="225"/>
    </location>
</feature>
<feature type="binding site" evidence="1">
    <location>
        <position position="112"/>
    </location>
    <ligand>
        <name>S-adenosyl-L-methionine</name>
        <dbReference type="ChEBI" id="CHEBI:59789"/>
    </ligand>
</feature>
<feature type="binding site" evidence="1">
    <location>
        <begin position="132"/>
        <end position="137"/>
    </location>
    <ligand>
        <name>S-adenosyl-L-methionine</name>
        <dbReference type="ChEBI" id="CHEBI:59789"/>
    </ligand>
</feature>
<accession>Q8A9C2</accession>
<organism>
    <name type="scientific">Bacteroides thetaiotaomicron (strain ATCC 29148 / DSM 2079 / JCM 5827 / CCUG 10774 / NCTC 10582 / VPI-5482 / E50)</name>
    <dbReference type="NCBI Taxonomy" id="226186"/>
    <lineage>
        <taxon>Bacteria</taxon>
        <taxon>Pseudomonadati</taxon>
        <taxon>Bacteroidota</taxon>
        <taxon>Bacteroidia</taxon>
        <taxon>Bacteroidales</taxon>
        <taxon>Bacteroidaceae</taxon>
        <taxon>Bacteroides</taxon>
    </lineage>
</organism>
<protein>
    <recommendedName>
        <fullName evidence="1">tRNA (guanine-N(1)-)-methyltransferase</fullName>
        <ecNumber evidence="1">2.1.1.228</ecNumber>
    </recommendedName>
    <alternativeName>
        <fullName evidence="1">M1G-methyltransferase</fullName>
    </alternativeName>
    <alternativeName>
        <fullName evidence="1">tRNA [GM37] methyltransferase</fullName>
    </alternativeName>
</protein>
<reference key="1">
    <citation type="journal article" date="2003" name="Science">
        <title>A genomic view of the human-Bacteroides thetaiotaomicron symbiosis.</title>
        <authorList>
            <person name="Xu J."/>
            <person name="Bjursell M.K."/>
            <person name="Himrod J."/>
            <person name="Deng S."/>
            <person name="Carmichael L.K."/>
            <person name="Chiang H.C."/>
            <person name="Hooper L.V."/>
            <person name="Gordon J.I."/>
        </authorList>
    </citation>
    <scope>NUCLEOTIDE SEQUENCE [LARGE SCALE GENOMIC DNA]</scope>
    <source>
        <strain>ATCC 29148 / DSM 2079 / JCM 5827 / CCUG 10774 / NCTC 10582 / VPI-5482 / E50</strain>
    </source>
</reference>
<dbReference type="EC" id="2.1.1.228" evidence="1"/>
<dbReference type="EMBL" id="AE015928">
    <property type="protein sequence ID" value="AAO76000.1"/>
    <property type="molecule type" value="Genomic_DNA"/>
</dbReference>
<dbReference type="RefSeq" id="NP_809806.1">
    <property type="nucleotide sequence ID" value="NC_004663.1"/>
</dbReference>
<dbReference type="RefSeq" id="WP_008765722.1">
    <property type="nucleotide sequence ID" value="NC_004663.1"/>
</dbReference>
<dbReference type="SMR" id="Q8A9C2"/>
<dbReference type="FunCoup" id="Q8A9C2">
    <property type="interactions" value="454"/>
</dbReference>
<dbReference type="STRING" id="226186.BT_0893"/>
<dbReference type="PaxDb" id="226186-BT_0893"/>
<dbReference type="EnsemblBacteria" id="AAO76000">
    <property type="protein sequence ID" value="AAO76000"/>
    <property type="gene ID" value="BT_0893"/>
</dbReference>
<dbReference type="GeneID" id="60926863"/>
<dbReference type="KEGG" id="bth:BT_0893"/>
<dbReference type="PATRIC" id="fig|226186.12.peg.905"/>
<dbReference type="eggNOG" id="COG0336">
    <property type="taxonomic scope" value="Bacteria"/>
</dbReference>
<dbReference type="HOGENOM" id="CLU_047363_0_1_10"/>
<dbReference type="InParanoid" id="Q8A9C2"/>
<dbReference type="OrthoDB" id="9807416at2"/>
<dbReference type="Proteomes" id="UP000001414">
    <property type="component" value="Chromosome"/>
</dbReference>
<dbReference type="GO" id="GO:0005829">
    <property type="term" value="C:cytosol"/>
    <property type="evidence" value="ECO:0000318"/>
    <property type="project" value="GO_Central"/>
</dbReference>
<dbReference type="GO" id="GO:0052906">
    <property type="term" value="F:tRNA (guanine(37)-N1)-methyltransferase activity"/>
    <property type="evidence" value="ECO:0000318"/>
    <property type="project" value="GO_Central"/>
</dbReference>
<dbReference type="GO" id="GO:0002939">
    <property type="term" value="P:tRNA N1-guanine methylation"/>
    <property type="evidence" value="ECO:0000318"/>
    <property type="project" value="GO_Central"/>
</dbReference>
<dbReference type="CDD" id="cd18080">
    <property type="entry name" value="TrmD-like"/>
    <property type="match status" value="1"/>
</dbReference>
<dbReference type="FunFam" id="3.40.1280.10:FF:000001">
    <property type="entry name" value="tRNA (guanine-N(1)-)-methyltransferase"/>
    <property type="match status" value="1"/>
</dbReference>
<dbReference type="Gene3D" id="3.40.1280.10">
    <property type="match status" value="1"/>
</dbReference>
<dbReference type="Gene3D" id="1.10.1270.20">
    <property type="entry name" value="tRNA(m1g37)methyltransferase, domain 2"/>
    <property type="match status" value="1"/>
</dbReference>
<dbReference type="HAMAP" id="MF_00605">
    <property type="entry name" value="TrmD"/>
    <property type="match status" value="1"/>
</dbReference>
<dbReference type="InterPro" id="IPR029028">
    <property type="entry name" value="Alpha/beta_knot_MTases"/>
</dbReference>
<dbReference type="InterPro" id="IPR023148">
    <property type="entry name" value="tRNA_m1G_MeTrfase_C_sf"/>
</dbReference>
<dbReference type="InterPro" id="IPR002649">
    <property type="entry name" value="tRNA_m1G_MeTrfase_TrmD"/>
</dbReference>
<dbReference type="InterPro" id="IPR029026">
    <property type="entry name" value="tRNA_m1G_MTases_N"/>
</dbReference>
<dbReference type="InterPro" id="IPR016009">
    <property type="entry name" value="tRNA_MeTrfase_TRMD/TRM10"/>
</dbReference>
<dbReference type="NCBIfam" id="NF000648">
    <property type="entry name" value="PRK00026.1"/>
    <property type="match status" value="1"/>
</dbReference>
<dbReference type="NCBIfam" id="TIGR00088">
    <property type="entry name" value="trmD"/>
    <property type="match status" value="1"/>
</dbReference>
<dbReference type="PANTHER" id="PTHR46417">
    <property type="entry name" value="TRNA (GUANINE-N(1)-)-METHYLTRANSFERASE"/>
    <property type="match status" value="1"/>
</dbReference>
<dbReference type="PANTHER" id="PTHR46417:SF1">
    <property type="entry name" value="TRNA (GUANINE-N(1)-)-METHYLTRANSFERASE"/>
    <property type="match status" value="1"/>
</dbReference>
<dbReference type="Pfam" id="PF01746">
    <property type="entry name" value="tRNA_m1G_MT"/>
    <property type="match status" value="1"/>
</dbReference>
<dbReference type="PIRSF" id="PIRSF000386">
    <property type="entry name" value="tRNA_mtase"/>
    <property type="match status" value="1"/>
</dbReference>
<dbReference type="SUPFAM" id="SSF75217">
    <property type="entry name" value="alpha/beta knot"/>
    <property type="match status" value="1"/>
</dbReference>
<comment type="function">
    <text evidence="1">Specifically methylates guanosine-37 in various tRNAs.</text>
</comment>
<comment type="catalytic activity">
    <reaction evidence="1">
        <text>guanosine(37) in tRNA + S-adenosyl-L-methionine = N(1)-methylguanosine(37) in tRNA + S-adenosyl-L-homocysteine + H(+)</text>
        <dbReference type="Rhea" id="RHEA:36899"/>
        <dbReference type="Rhea" id="RHEA-COMP:10145"/>
        <dbReference type="Rhea" id="RHEA-COMP:10147"/>
        <dbReference type="ChEBI" id="CHEBI:15378"/>
        <dbReference type="ChEBI" id="CHEBI:57856"/>
        <dbReference type="ChEBI" id="CHEBI:59789"/>
        <dbReference type="ChEBI" id="CHEBI:73542"/>
        <dbReference type="ChEBI" id="CHEBI:74269"/>
        <dbReference type="EC" id="2.1.1.228"/>
    </reaction>
</comment>
<comment type="subunit">
    <text evidence="1">Homodimer.</text>
</comment>
<comment type="subcellular location">
    <subcellularLocation>
        <location evidence="1">Cytoplasm</location>
    </subcellularLocation>
</comment>
<comment type="similarity">
    <text evidence="1">Belongs to the RNA methyltransferase TrmD family.</text>
</comment>
<evidence type="ECO:0000255" key="1">
    <source>
        <dbReference type="HAMAP-Rule" id="MF_00605"/>
    </source>
</evidence>